<feature type="chain" id="PRO_0000187729" description="Peptidyl-tRNA hydrolase">
    <location>
        <begin position="1"/>
        <end position="187"/>
    </location>
</feature>
<feature type="active site" description="Proton acceptor" evidence="1">
    <location>
        <position position="23"/>
    </location>
</feature>
<feature type="binding site" evidence="1">
    <location>
        <position position="18"/>
    </location>
    <ligand>
        <name>tRNA</name>
        <dbReference type="ChEBI" id="CHEBI:17843"/>
    </ligand>
</feature>
<feature type="binding site" evidence="1">
    <location>
        <position position="65"/>
    </location>
    <ligand>
        <name>tRNA</name>
        <dbReference type="ChEBI" id="CHEBI:17843"/>
    </ligand>
</feature>
<feature type="binding site" evidence="1">
    <location>
        <position position="67"/>
    </location>
    <ligand>
        <name>tRNA</name>
        <dbReference type="ChEBI" id="CHEBI:17843"/>
    </ligand>
</feature>
<feature type="binding site" evidence="1">
    <location>
        <position position="113"/>
    </location>
    <ligand>
        <name>tRNA</name>
        <dbReference type="ChEBI" id="CHEBI:17843"/>
    </ligand>
</feature>
<feature type="site" description="Discriminates between blocked and unblocked aminoacyl-tRNA" evidence="1">
    <location>
        <position position="13"/>
    </location>
</feature>
<feature type="site" description="Stabilizes the basic form of H active site to accept a proton" evidence="1">
    <location>
        <position position="92"/>
    </location>
</feature>
<protein>
    <recommendedName>
        <fullName evidence="1">Peptidyl-tRNA hydrolase</fullName>
        <shortName evidence="1">Pth</shortName>
        <ecNumber evidence="1">3.1.1.29</ecNumber>
    </recommendedName>
</protein>
<gene>
    <name evidence="1" type="primary">pth</name>
    <name type="ordered locus">CBU_1841</name>
</gene>
<keyword id="KW-0963">Cytoplasm</keyword>
<keyword id="KW-0378">Hydrolase</keyword>
<keyword id="KW-1185">Reference proteome</keyword>
<keyword id="KW-0694">RNA-binding</keyword>
<keyword id="KW-0820">tRNA-binding</keyword>
<proteinExistence type="inferred from homology"/>
<reference key="1">
    <citation type="journal article" date="2003" name="Proc. Natl. Acad. Sci. U.S.A.">
        <title>Complete genome sequence of the Q-fever pathogen, Coxiella burnetii.</title>
        <authorList>
            <person name="Seshadri R."/>
            <person name="Paulsen I.T."/>
            <person name="Eisen J.A."/>
            <person name="Read T.D."/>
            <person name="Nelson K.E."/>
            <person name="Nelson W.C."/>
            <person name="Ward N.L."/>
            <person name="Tettelin H."/>
            <person name="Davidsen T.M."/>
            <person name="Beanan M.J."/>
            <person name="DeBoy R.T."/>
            <person name="Daugherty S.C."/>
            <person name="Brinkac L.M."/>
            <person name="Madupu R."/>
            <person name="Dodson R.J."/>
            <person name="Khouri H.M."/>
            <person name="Lee K.H."/>
            <person name="Carty H.A."/>
            <person name="Scanlan D."/>
            <person name="Heinzen R.A."/>
            <person name="Thompson H.A."/>
            <person name="Samuel J.E."/>
            <person name="Fraser C.M."/>
            <person name="Heidelberg J.F."/>
        </authorList>
    </citation>
    <scope>NUCLEOTIDE SEQUENCE [LARGE SCALE GENOMIC DNA]</scope>
    <source>
        <strain>RSA 493 / Nine Mile phase I</strain>
    </source>
</reference>
<dbReference type="EC" id="3.1.1.29" evidence="1"/>
<dbReference type="EMBL" id="AE016828">
    <property type="protein sequence ID" value="AAO91334.1"/>
    <property type="molecule type" value="Genomic_DNA"/>
</dbReference>
<dbReference type="RefSeq" id="NP_820820.1">
    <property type="nucleotide sequence ID" value="NC_002971.4"/>
</dbReference>
<dbReference type="RefSeq" id="WP_010958480.1">
    <property type="nucleotide sequence ID" value="NC_002971.4"/>
</dbReference>
<dbReference type="SMR" id="Q83AP0"/>
<dbReference type="STRING" id="227377.CBU_1841"/>
<dbReference type="DNASU" id="1209753"/>
<dbReference type="EnsemblBacteria" id="AAO91334">
    <property type="protein sequence ID" value="AAO91334"/>
    <property type="gene ID" value="CBU_1841"/>
</dbReference>
<dbReference type="GeneID" id="1209753"/>
<dbReference type="KEGG" id="cbu:CBU_1841"/>
<dbReference type="PATRIC" id="fig|227377.7.peg.1824"/>
<dbReference type="eggNOG" id="COG0193">
    <property type="taxonomic scope" value="Bacteria"/>
</dbReference>
<dbReference type="HOGENOM" id="CLU_062456_3_1_6"/>
<dbReference type="OrthoDB" id="9800507at2"/>
<dbReference type="Proteomes" id="UP000002671">
    <property type="component" value="Chromosome"/>
</dbReference>
<dbReference type="GO" id="GO:0005737">
    <property type="term" value="C:cytoplasm"/>
    <property type="evidence" value="ECO:0007669"/>
    <property type="project" value="UniProtKB-SubCell"/>
</dbReference>
<dbReference type="GO" id="GO:0004045">
    <property type="term" value="F:peptidyl-tRNA hydrolase activity"/>
    <property type="evidence" value="ECO:0000318"/>
    <property type="project" value="GO_Central"/>
</dbReference>
<dbReference type="GO" id="GO:0000049">
    <property type="term" value="F:tRNA binding"/>
    <property type="evidence" value="ECO:0007669"/>
    <property type="project" value="UniProtKB-UniRule"/>
</dbReference>
<dbReference type="GO" id="GO:0006515">
    <property type="term" value="P:protein quality control for misfolded or incompletely synthesized proteins"/>
    <property type="evidence" value="ECO:0007669"/>
    <property type="project" value="UniProtKB-UniRule"/>
</dbReference>
<dbReference type="GO" id="GO:0072344">
    <property type="term" value="P:rescue of stalled ribosome"/>
    <property type="evidence" value="ECO:0007669"/>
    <property type="project" value="UniProtKB-UniRule"/>
</dbReference>
<dbReference type="CDD" id="cd00462">
    <property type="entry name" value="PTH"/>
    <property type="match status" value="1"/>
</dbReference>
<dbReference type="FunFam" id="3.40.50.1470:FF:000001">
    <property type="entry name" value="Peptidyl-tRNA hydrolase"/>
    <property type="match status" value="1"/>
</dbReference>
<dbReference type="Gene3D" id="3.40.50.1470">
    <property type="entry name" value="Peptidyl-tRNA hydrolase"/>
    <property type="match status" value="1"/>
</dbReference>
<dbReference type="HAMAP" id="MF_00083">
    <property type="entry name" value="Pept_tRNA_hydro_bact"/>
    <property type="match status" value="1"/>
</dbReference>
<dbReference type="InterPro" id="IPR001328">
    <property type="entry name" value="Pept_tRNA_hydro"/>
</dbReference>
<dbReference type="InterPro" id="IPR018171">
    <property type="entry name" value="Pept_tRNA_hydro_CS"/>
</dbReference>
<dbReference type="InterPro" id="IPR036416">
    <property type="entry name" value="Pept_tRNA_hydro_sf"/>
</dbReference>
<dbReference type="NCBIfam" id="TIGR00447">
    <property type="entry name" value="pth"/>
    <property type="match status" value="1"/>
</dbReference>
<dbReference type="PANTHER" id="PTHR17224">
    <property type="entry name" value="PEPTIDYL-TRNA HYDROLASE"/>
    <property type="match status" value="1"/>
</dbReference>
<dbReference type="PANTHER" id="PTHR17224:SF1">
    <property type="entry name" value="PEPTIDYL-TRNA HYDROLASE"/>
    <property type="match status" value="1"/>
</dbReference>
<dbReference type="Pfam" id="PF01195">
    <property type="entry name" value="Pept_tRNA_hydro"/>
    <property type="match status" value="1"/>
</dbReference>
<dbReference type="SUPFAM" id="SSF53178">
    <property type="entry name" value="Peptidyl-tRNA hydrolase-like"/>
    <property type="match status" value="1"/>
</dbReference>
<dbReference type="PROSITE" id="PS01195">
    <property type="entry name" value="PEPT_TRNA_HYDROL_1"/>
    <property type="match status" value="1"/>
</dbReference>
<dbReference type="PROSITE" id="PS01196">
    <property type="entry name" value="PEPT_TRNA_HYDROL_2"/>
    <property type="match status" value="1"/>
</dbReference>
<organism>
    <name type="scientific">Coxiella burnetii (strain RSA 493 / Nine Mile phase I)</name>
    <dbReference type="NCBI Taxonomy" id="227377"/>
    <lineage>
        <taxon>Bacteria</taxon>
        <taxon>Pseudomonadati</taxon>
        <taxon>Pseudomonadota</taxon>
        <taxon>Gammaproteobacteria</taxon>
        <taxon>Legionellales</taxon>
        <taxon>Coxiellaceae</taxon>
        <taxon>Coxiella</taxon>
    </lineage>
</organism>
<accession>Q83AP0</accession>
<name>PTH_COXBU</name>
<evidence type="ECO:0000255" key="1">
    <source>
        <dbReference type="HAMAP-Rule" id="MF_00083"/>
    </source>
</evidence>
<comment type="function">
    <text evidence="1">Hydrolyzes ribosome-free peptidyl-tRNAs (with 1 or more amino acids incorporated), which drop off the ribosome during protein synthesis, or as a result of ribosome stalling.</text>
</comment>
<comment type="function">
    <text evidence="1">Catalyzes the release of premature peptidyl moieties from peptidyl-tRNA molecules trapped in stalled 50S ribosomal subunits, and thus maintains levels of free tRNAs and 50S ribosomes.</text>
</comment>
<comment type="catalytic activity">
    <reaction evidence="1">
        <text>an N-acyl-L-alpha-aminoacyl-tRNA + H2O = an N-acyl-L-amino acid + a tRNA + H(+)</text>
        <dbReference type="Rhea" id="RHEA:54448"/>
        <dbReference type="Rhea" id="RHEA-COMP:10123"/>
        <dbReference type="Rhea" id="RHEA-COMP:13883"/>
        <dbReference type="ChEBI" id="CHEBI:15377"/>
        <dbReference type="ChEBI" id="CHEBI:15378"/>
        <dbReference type="ChEBI" id="CHEBI:59874"/>
        <dbReference type="ChEBI" id="CHEBI:78442"/>
        <dbReference type="ChEBI" id="CHEBI:138191"/>
        <dbReference type="EC" id="3.1.1.29"/>
    </reaction>
</comment>
<comment type="subunit">
    <text evidence="1">Monomer.</text>
</comment>
<comment type="subcellular location">
    <subcellularLocation>
        <location evidence="1">Cytoplasm</location>
    </subcellularLocation>
</comment>
<comment type="similarity">
    <text evidence="1">Belongs to the PTH family.</text>
</comment>
<sequence>MSGGVKLIAGLGNPGDQYARTRHNVGAWFLETLAQQRNQSLAKENKFHGFVAKCNDYWLLKPTTFMNESGQAVAALAHFYKIKPSEILIAHDELDFPAGDIRLKEGGGHGGHNGLRNIIQHLGSSDFYRLRIGINHPGHKDRVTPYVLSPPSENDRIAILAAIEKGLRLIPELVQGDFQKVMRELHS</sequence>